<comment type="function">
    <text evidence="1">Relaxes both positive and negative superturns and exhibits a strong decatenase activity.</text>
</comment>
<comment type="catalytic activity">
    <reaction evidence="1">
        <text>ATP-dependent breakage, passage and rejoining of double-stranded DNA.</text>
        <dbReference type="EC" id="5.6.2.2"/>
    </reaction>
</comment>
<comment type="subunit">
    <text evidence="1">Homodimer. Heterotetramer of two Top6A and two Top6B chains.</text>
</comment>
<comment type="similarity">
    <text evidence="1">Belongs to the TOP6B family.</text>
</comment>
<proteinExistence type="inferred from homology"/>
<gene>
    <name evidence="1" type="primary">top6B</name>
    <name type="ordered locus">MA_1587</name>
</gene>
<sequence>MEIPIAEELAKKQKSISVAEFFEKNRQILGFDSAPRSLITTVKEAVDNSLDACEEAGILPDILVQVERTGQDYVTVIIEDNGPGIVREQIPKVFAKLLYGSRFHALKQSRGQQGIGISAAVLYAQMTAGRHTKILSKTGSNVPAHYYELMINTSTNEPDILMDEVRDWFRPHGTQIELEMKAAYVKGRRQSIYEYLKATAIVNPHARITLIDPDGNEEVFERATDKIPDPAEEILPHPEGIELGTLMKMLHYTERQKLAPFLRYSFCKIGLLTADEICKAAGLDPEIDPHALGRHEARKLIEAFQKVKIMSPPTDCLSPIGEELIYRGLEKETNVDFIATSTRKPAVYSGNPFVVEVGLAYGGNLPKEEKISIMRFANRVPLLYQQGGCVTTHAVEDIRWKQYGLNQPGGGVPIGPVLLLIHVASINVPFTSESKDAIADIPVIKEEVDLAVKEVARKLKHYLSKQSNLKKRREKEIIITKVLPKMAVKVANILEKDVPDINPVVAKIMGNLLVYRKVKSNGDGTADVAIKVKNFGTSAHSFRVHEMLPCKINGAKPEPKVVTMDNDYDYVWDVSAAAGSSKVLSYKIESATVEELRKLPQLIVEGIEEELVTGAKAFRGV</sequence>
<dbReference type="EC" id="5.6.2.2" evidence="1"/>
<dbReference type="EMBL" id="AE010299">
    <property type="protein sequence ID" value="AAM05000.1"/>
    <property type="molecule type" value="Genomic_DNA"/>
</dbReference>
<dbReference type="RefSeq" id="WP_011021597.1">
    <property type="nucleotide sequence ID" value="NC_003552.1"/>
</dbReference>
<dbReference type="SMR" id="Q8TQF7"/>
<dbReference type="FunCoup" id="Q8TQF7">
    <property type="interactions" value="21"/>
</dbReference>
<dbReference type="STRING" id="188937.MA_1587"/>
<dbReference type="EnsemblBacteria" id="AAM05000">
    <property type="protein sequence ID" value="AAM05000"/>
    <property type="gene ID" value="MA_1587"/>
</dbReference>
<dbReference type="GeneID" id="1473475"/>
<dbReference type="KEGG" id="mac:MA_1587"/>
<dbReference type="HOGENOM" id="CLU_006403_0_0_2"/>
<dbReference type="InParanoid" id="Q8TQF7"/>
<dbReference type="OrthoDB" id="65493at2157"/>
<dbReference type="PhylomeDB" id="Q8TQF7"/>
<dbReference type="Proteomes" id="UP000002487">
    <property type="component" value="Chromosome"/>
</dbReference>
<dbReference type="GO" id="GO:0005829">
    <property type="term" value="C:cytosol"/>
    <property type="evidence" value="ECO:0000318"/>
    <property type="project" value="GO_Central"/>
</dbReference>
<dbReference type="GO" id="GO:0015935">
    <property type="term" value="C:small ribosomal subunit"/>
    <property type="evidence" value="ECO:0000318"/>
    <property type="project" value="GO_Central"/>
</dbReference>
<dbReference type="GO" id="GO:0005524">
    <property type="term" value="F:ATP binding"/>
    <property type="evidence" value="ECO:0007669"/>
    <property type="project" value="UniProtKB-UniRule"/>
</dbReference>
<dbReference type="GO" id="GO:0003677">
    <property type="term" value="F:DNA binding"/>
    <property type="evidence" value="ECO:0007669"/>
    <property type="project" value="UniProtKB-UniRule"/>
</dbReference>
<dbReference type="GO" id="GO:0003918">
    <property type="term" value="F:DNA topoisomerase type II (double strand cut, ATP-hydrolyzing) activity"/>
    <property type="evidence" value="ECO:0007669"/>
    <property type="project" value="UniProtKB-UniRule"/>
</dbReference>
<dbReference type="GO" id="GO:0006265">
    <property type="term" value="P:DNA topological change"/>
    <property type="evidence" value="ECO:0007669"/>
    <property type="project" value="UniProtKB-UniRule"/>
</dbReference>
<dbReference type="CDD" id="cd16933">
    <property type="entry name" value="HATPase_TopVIB-like"/>
    <property type="match status" value="1"/>
</dbReference>
<dbReference type="CDD" id="cd00823">
    <property type="entry name" value="TopoIIB_Trans"/>
    <property type="match status" value="1"/>
</dbReference>
<dbReference type="FunFam" id="3.30.230.10:FF:000089">
    <property type="entry name" value="Type 2 DNA topoisomerase 6 subunit B"/>
    <property type="match status" value="1"/>
</dbReference>
<dbReference type="FunFam" id="3.30.565.10:FF:000062">
    <property type="entry name" value="Type 2 DNA topoisomerase 6 subunit B"/>
    <property type="match status" value="1"/>
</dbReference>
<dbReference type="Gene3D" id="1.10.8.50">
    <property type="match status" value="1"/>
</dbReference>
<dbReference type="Gene3D" id="2.60.40.2960">
    <property type="match status" value="1"/>
</dbReference>
<dbReference type="Gene3D" id="3.30.230.10">
    <property type="match status" value="1"/>
</dbReference>
<dbReference type="Gene3D" id="6.10.20.80">
    <property type="match status" value="1"/>
</dbReference>
<dbReference type="Gene3D" id="3.30.565.10">
    <property type="entry name" value="Histidine kinase-like ATPase, C-terminal domain"/>
    <property type="match status" value="1"/>
</dbReference>
<dbReference type="HAMAP" id="MF_00322">
    <property type="entry name" value="Top6B"/>
    <property type="match status" value="1"/>
</dbReference>
<dbReference type="InterPro" id="IPR036890">
    <property type="entry name" value="HATPase_C_sf"/>
</dbReference>
<dbReference type="InterPro" id="IPR020568">
    <property type="entry name" value="Ribosomal_Su5_D2-typ_SF"/>
</dbReference>
<dbReference type="InterPro" id="IPR010979">
    <property type="entry name" value="Ribosomal_uS13-like_H2TH"/>
</dbReference>
<dbReference type="InterPro" id="IPR014721">
    <property type="entry name" value="Ribsml_uS5_D2-typ_fold_subgr"/>
</dbReference>
<dbReference type="InterPro" id="IPR040494">
    <property type="entry name" value="Top6b_C"/>
</dbReference>
<dbReference type="InterPro" id="IPR005734">
    <property type="entry name" value="TopoVI_B"/>
</dbReference>
<dbReference type="InterPro" id="IPR015320">
    <property type="entry name" value="TopoVI_B_transducer"/>
</dbReference>
<dbReference type="NCBIfam" id="NF003218">
    <property type="entry name" value="PRK04184.1"/>
    <property type="match status" value="1"/>
</dbReference>
<dbReference type="NCBIfam" id="TIGR01052">
    <property type="entry name" value="top6b"/>
    <property type="match status" value="1"/>
</dbReference>
<dbReference type="PANTHER" id="PTHR48444">
    <property type="entry name" value="DNA TOPOISOMERASE 6 SUBUNIT B"/>
    <property type="match status" value="1"/>
</dbReference>
<dbReference type="PANTHER" id="PTHR48444:SF1">
    <property type="entry name" value="DNA TOPOISOMERASE 6 SUBUNIT B"/>
    <property type="match status" value="1"/>
</dbReference>
<dbReference type="Pfam" id="PF02518">
    <property type="entry name" value="HATPase_c"/>
    <property type="match status" value="1"/>
</dbReference>
<dbReference type="Pfam" id="PF18000">
    <property type="entry name" value="Top6b_C"/>
    <property type="match status" value="1"/>
</dbReference>
<dbReference type="Pfam" id="PF09239">
    <property type="entry name" value="Topo-VIb_trans"/>
    <property type="match status" value="1"/>
</dbReference>
<dbReference type="PIRSF" id="PIRSF006553">
    <property type="entry name" value="TopoVI_B"/>
    <property type="match status" value="1"/>
</dbReference>
<dbReference type="SMART" id="SM00387">
    <property type="entry name" value="HATPase_c"/>
    <property type="match status" value="1"/>
</dbReference>
<dbReference type="SUPFAM" id="SSF55874">
    <property type="entry name" value="ATPase domain of HSP90 chaperone/DNA topoisomerase II/histidine kinase"/>
    <property type="match status" value="1"/>
</dbReference>
<dbReference type="SUPFAM" id="SSF54211">
    <property type="entry name" value="Ribosomal protein S5 domain 2-like"/>
    <property type="match status" value="1"/>
</dbReference>
<dbReference type="SUPFAM" id="SSF46946">
    <property type="entry name" value="S13-like H2TH domain"/>
    <property type="match status" value="1"/>
</dbReference>
<organism>
    <name type="scientific">Methanosarcina acetivorans (strain ATCC 35395 / DSM 2834 / JCM 12185 / C2A)</name>
    <dbReference type="NCBI Taxonomy" id="188937"/>
    <lineage>
        <taxon>Archaea</taxon>
        <taxon>Methanobacteriati</taxon>
        <taxon>Methanobacteriota</taxon>
        <taxon>Stenosarchaea group</taxon>
        <taxon>Methanomicrobia</taxon>
        <taxon>Methanosarcinales</taxon>
        <taxon>Methanosarcinaceae</taxon>
        <taxon>Methanosarcina</taxon>
    </lineage>
</organism>
<feature type="chain" id="PRO_0000145461" description="Type 2 DNA topoisomerase 6 subunit B">
    <location>
        <begin position="1"/>
        <end position="621"/>
    </location>
</feature>
<feature type="binding site" evidence="1">
    <location>
        <position position="48"/>
    </location>
    <ligand>
        <name>ATP</name>
        <dbReference type="ChEBI" id="CHEBI:30616"/>
    </ligand>
</feature>
<feature type="binding site" evidence="1">
    <location>
        <position position="80"/>
    </location>
    <ligand>
        <name>ATP</name>
        <dbReference type="ChEBI" id="CHEBI:30616"/>
    </ligand>
</feature>
<feature type="binding site" evidence="1">
    <location>
        <begin position="101"/>
        <end position="102"/>
    </location>
    <ligand>
        <name>ATP</name>
        <dbReference type="ChEBI" id="CHEBI:30616"/>
    </ligand>
</feature>
<feature type="binding site" evidence="1">
    <location>
        <begin position="111"/>
        <end position="118"/>
    </location>
    <ligand>
        <name>ATP</name>
        <dbReference type="ChEBI" id="CHEBI:30616"/>
    </ligand>
</feature>
<feature type="binding site" evidence="1">
    <location>
        <position position="435"/>
    </location>
    <ligand>
        <name>ATP</name>
        <dbReference type="ChEBI" id="CHEBI:30616"/>
    </ligand>
</feature>
<protein>
    <recommendedName>
        <fullName evidence="1">Type 2 DNA topoisomerase 6 subunit B</fullName>
        <ecNumber evidence="1">5.6.2.2</ecNumber>
    </recommendedName>
    <alternativeName>
        <fullName evidence="1">Type II DNA topoisomerase VI subunit B</fullName>
        <shortName evidence="1">TopoVI-B</shortName>
    </alternativeName>
</protein>
<accession>Q8TQF7</accession>
<name>TOP6B_METAC</name>
<evidence type="ECO:0000255" key="1">
    <source>
        <dbReference type="HAMAP-Rule" id="MF_00322"/>
    </source>
</evidence>
<keyword id="KW-0067">ATP-binding</keyword>
<keyword id="KW-0238">DNA-binding</keyword>
<keyword id="KW-0413">Isomerase</keyword>
<keyword id="KW-0547">Nucleotide-binding</keyword>
<keyword id="KW-1185">Reference proteome</keyword>
<keyword id="KW-0799">Topoisomerase</keyword>
<reference key="1">
    <citation type="journal article" date="2002" name="Genome Res.">
        <title>The genome of Methanosarcina acetivorans reveals extensive metabolic and physiological diversity.</title>
        <authorList>
            <person name="Galagan J.E."/>
            <person name="Nusbaum C."/>
            <person name="Roy A."/>
            <person name="Endrizzi M.G."/>
            <person name="Macdonald P."/>
            <person name="FitzHugh W."/>
            <person name="Calvo S."/>
            <person name="Engels R."/>
            <person name="Smirnov S."/>
            <person name="Atnoor D."/>
            <person name="Brown A."/>
            <person name="Allen N."/>
            <person name="Naylor J."/>
            <person name="Stange-Thomann N."/>
            <person name="DeArellano K."/>
            <person name="Johnson R."/>
            <person name="Linton L."/>
            <person name="McEwan P."/>
            <person name="McKernan K."/>
            <person name="Talamas J."/>
            <person name="Tirrell A."/>
            <person name="Ye W."/>
            <person name="Zimmer A."/>
            <person name="Barber R.D."/>
            <person name="Cann I."/>
            <person name="Graham D.E."/>
            <person name="Grahame D.A."/>
            <person name="Guss A.M."/>
            <person name="Hedderich R."/>
            <person name="Ingram-Smith C."/>
            <person name="Kuettner H.C."/>
            <person name="Krzycki J.A."/>
            <person name="Leigh J.A."/>
            <person name="Li W."/>
            <person name="Liu J."/>
            <person name="Mukhopadhyay B."/>
            <person name="Reeve J.N."/>
            <person name="Smith K."/>
            <person name="Springer T.A."/>
            <person name="Umayam L.A."/>
            <person name="White O."/>
            <person name="White R.H."/>
            <person name="de Macario E.C."/>
            <person name="Ferry J.G."/>
            <person name="Jarrell K.F."/>
            <person name="Jing H."/>
            <person name="Macario A.J.L."/>
            <person name="Paulsen I.T."/>
            <person name="Pritchett M."/>
            <person name="Sowers K.R."/>
            <person name="Swanson R.V."/>
            <person name="Zinder S.H."/>
            <person name="Lander E."/>
            <person name="Metcalf W.W."/>
            <person name="Birren B."/>
        </authorList>
    </citation>
    <scope>NUCLEOTIDE SEQUENCE [LARGE SCALE GENOMIC DNA]</scope>
    <source>
        <strain>ATCC 35395 / DSM 2834 / JCM 12185 / C2A</strain>
    </source>
</reference>